<geneLocation type="mitochondrion"/>
<accession>P92513</accession>
<accession>Q1ZXZ9</accession>
<keyword id="KW-0496">Mitochondrion</keyword>
<keyword id="KW-1185">Reference proteome</keyword>
<gene>
    <name type="ordered locus">AtMg00720</name>
</gene>
<organism>
    <name type="scientific">Arabidopsis thaliana</name>
    <name type="common">Mouse-ear cress</name>
    <dbReference type="NCBI Taxonomy" id="3702"/>
    <lineage>
        <taxon>Eukaryota</taxon>
        <taxon>Viridiplantae</taxon>
        <taxon>Streptophyta</taxon>
        <taxon>Embryophyta</taxon>
        <taxon>Tracheophyta</taxon>
        <taxon>Spermatophyta</taxon>
        <taxon>Magnoliopsida</taxon>
        <taxon>eudicotyledons</taxon>
        <taxon>Gunneridae</taxon>
        <taxon>Pentapetalae</taxon>
        <taxon>rosids</taxon>
        <taxon>malvids</taxon>
        <taxon>Brassicales</taxon>
        <taxon>Brassicaceae</taxon>
        <taxon>Camelineae</taxon>
        <taxon>Arabidopsis</taxon>
    </lineage>
</organism>
<reference key="1">
    <citation type="journal article" date="1997" name="Nat. Genet.">
        <title>The mitochondrial genome of Arabidopsis thaliana contains 57 genes in 366,924 nucleotides.</title>
        <authorList>
            <person name="Unseld M."/>
            <person name="Marienfeld J.R."/>
            <person name="Brandt P."/>
            <person name="Brennicke A."/>
        </authorList>
    </citation>
    <scope>NUCLEOTIDE SEQUENCE [LARGE SCALE GENOMIC DNA]</scope>
    <source>
        <strain>cv. C24</strain>
    </source>
</reference>
<reference key="2">
    <citation type="journal article" date="2018" name="Plant Cell">
        <title>Correction of persistent errors in Arabidopsis reference mitochondrial genomes.</title>
        <authorList>
            <person name="Sloan D.B."/>
            <person name="Wu Z."/>
            <person name="Sharbrough J."/>
        </authorList>
    </citation>
    <scope>NUCLEOTIDE SEQUENCE [LARGE SCALE GENOMIC DNA]</scope>
    <source>
        <strain>cv. Columbia</strain>
    </source>
</reference>
<protein>
    <recommendedName>
        <fullName>Uncharacterized mitochondrial protein AtMg00720</fullName>
    </recommendedName>
    <alternativeName>
        <fullName>ORF107d</fullName>
    </alternativeName>
</protein>
<name>M720_ARATH</name>
<dbReference type="EMBL" id="Y08501">
    <property type="protein sequence ID" value="CAA69817.1"/>
    <property type="molecule type" value="Genomic_DNA"/>
</dbReference>
<dbReference type="EMBL" id="BK010421">
    <property type="status" value="NOT_ANNOTATED_CDS"/>
    <property type="molecule type" value="Genomic_DNA"/>
</dbReference>
<dbReference type="RefSeq" id="NP_085531.1">
    <property type="nucleotide sequence ID" value="NC_001284.2"/>
</dbReference>
<dbReference type="STRING" id="3702.P92513"/>
<dbReference type="PaxDb" id="3702-ATMG00720.1"/>
<dbReference type="EnsemblPlants" id="ATMG00720.1">
    <property type="protein sequence ID" value="ATMG00720.1"/>
    <property type="gene ID" value="ATMG00720"/>
</dbReference>
<dbReference type="Gramene" id="ATMG00720.1">
    <property type="protein sequence ID" value="ATMG00720.1"/>
    <property type="gene ID" value="ATMG00720"/>
</dbReference>
<dbReference type="Araport" id="ATMG00720"/>
<dbReference type="TAIR" id="ATMG00720">
    <property type="gene designation" value="ORF107D"/>
</dbReference>
<dbReference type="HOGENOM" id="CLU_2213569_0_0_1"/>
<dbReference type="InParanoid" id="P92513"/>
<dbReference type="PRO" id="PR:P92513"/>
<dbReference type="Proteomes" id="UP000006548">
    <property type="component" value="Mitochondrion MT"/>
</dbReference>
<dbReference type="GO" id="GO:0005739">
    <property type="term" value="C:mitochondrion"/>
    <property type="evidence" value="ECO:0007669"/>
    <property type="project" value="UniProtKB-SubCell"/>
</dbReference>
<comment type="subcellular location">
    <subcellularLocation>
        <location evidence="1">Mitochondrion</location>
    </subcellularLocation>
</comment>
<evidence type="ECO:0000305" key="1"/>
<proteinExistence type="predicted"/>
<feature type="chain" id="PRO_0000196787" description="Uncharacterized mitochondrial protein AtMg00720">
    <location>
        <begin position="1"/>
        <end position="107"/>
    </location>
</feature>
<sequence>MEDFGFTTALRSESVYIVFRFISSSSLSYNTLSSAFIRLDWIKTPRHRAASRALGIQSNGQICTACPHLSALFGFLSVASCFPSNKDDGLHTRIYFDLEFQPDSAVF</sequence>